<reference key="1">
    <citation type="submission" date="1996-05" db="EMBL/GenBank/DDBJ databases">
        <authorList>
            <person name="Chen T."/>
            <person name="Leschine S.B."/>
        </authorList>
    </citation>
    <scope>NUCLEOTIDE SEQUENCE [GENOMIC DNA]</scope>
    <source>
        <strain>B3B</strain>
    </source>
</reference>
<protein>
    <recommendedName>
        <fullName>Nitrogenase iron-iron protein alpha chain</fullName>
        <ecNumber>1.18.6.1</ecNumber>
    </recommendedName>
    <alternativeName>
        <fullName>Dinitrogenase 3 subunit alpha</fullName>
    </alternativeName>
    <alternativeName>
        <fullName>Nitrogenase component I</fullName>
    </alternativeName>
</protein>
<organism>
    <name type="scientific">Ruminiclostridium hungatei</name>
    <name type="common">Clostridium hungatei</name>
    <dbReference type="NCBI Taxonomy" id="48256"/>
    <lineage>
        <taxon>Bacteria</taxon>
        <taxon>Bacillati</taxon>
        <taxon>Bacillota</taxon>
        <taxon>Clostridia</taxon>
        <taxon>Eubacteriales</taxon>
        <taxon>Oscillospiraceae</taxon>
        <taxon>Ruminiclostridium</taxon>
    </lineage>
</organism>
<gene>
    <name type="primary">anfD</name>
</gene>
<name>ANFD_RUMHU</name>
<accession>Q46082</accession>
<keyword id="KW-0067">ATP-binding</keyword>
<keyword id="KW-0408">Iron</keyword>
<keyword id="KW-0411">Iron-sulfur</keyword>
<keyword id="KW-0479">Metal-binding</keyword>
<keyword id="KW-0535">Nitrogen fixation</keyword>
<keyword id="KW-0547">Nucleotide-binding</keyword>
<keyword id="KW-0560">Oxidoreductase</keyword>
<sequence length="518" mass="58647">MPHHEFECSKVIPERKKHAVIKGKGETLADALPQGYLNTIPGSISERGCAYCVAKHVIGTPMKDVIHISHGPVGCTYDTWQTKRYISDNDNFQLKYTYATDVKEKHIVFGAEKLLKQNIIEAFKRFPQIKRMTIYQTPCTALIGDDINAIAEEVMEEMPEVDIFVCNSPGFAGPSQSGGHHKINIAWINQKVGTVEPEITGDHVINYVGEYNIQGDQEVMVDYFKRMGIQVLSTFTGNLSYDGLRAMHRAHLNVLECARSAEYICNELRVRYGIPRLDIDGFGFKPLADSLRKYGMFFGIEDRRKAIIDEEVARWKPELDWYKERLMGKKVSVWPGGSKLWHWAHVIEEEMGLKVVSVYTKFGHQGDMEKGMPRCGEGTLAIDDPNELEGLEALEMLKPDIILTGKRPGEVAKKVRVPYLNAHAYHNGPYKGFEGWVRFARDIYNAIYSPIHQLSGIDITKDNAPEWGNGFRTRQMLSDGNLSDAVRNSETLAQYTGGYDSVSNVREREYPAFERKVG</sequence>
<dbReference type="EC" id="1.18.6.1"/>
<dbReference type="EMBL" id="U59415">
    <property type="protein sequence ID" value="AAB02935.1"/>
    <property type="status" value="ALT_FRAME"/>
    <property type="molecule type" value="Genomic_DNA"/>
</dbReference>
<dbReference type="SMR" id="Q46082"/>
<dbReference type="STRING" id="48256.CLHUN_03880"/>
<dbReference type="GO" id="GO:0005524">
    <property type="term" value="F:ATP binding"/>
    <property type="evidence" value="ECO:0007669"/>
    <property type="project" value="UniProtKB-KW"/>
</dbReference>
<dbReference type="GO" id="GO:0051536">
    <property type="term" value="F:iron-sulfur cluster binding"/>
    <property type="evidence" value="ECO:0007669"/>
    <property type="project" value="UniProtKB-KW"/>
</dbReference>
<dbReference type="GO" id="GO:0046872">
    <property type="term" value="F:metal ion binding"/>
    <property type="evidence" value="ECO:0007669"/>
    <property type="project" value="UniProtKB-KW"/>
</dbReference>
<dbReference type="GO" id="GO:0016163">
    <property type="term" value="F:nitrogenase activity"/>
    <property type="evidence" value="ECO:0007669"/>
    <property type="project" value="UniProtKB-EC"/>
</dbReference>
<dbReference type="GO" id="GO:0009399">
    <property type="term" value="P:nitrogen fixation"/>
    <property type="evidence" value="ECO:0007669"/>
    <property type="project" value="UniProtKB-KW"/>
</dbReference>
<dbReference type="CDD" id="cd01977">
    <property type="entry name" value="Nitrogenase_VFe_alpha"/>
    <property type="match status" value="1"/>
</dbReference>
<dbReference type="Gene3D" id="3.40.50.1980">
    <property type="entry name" value="Nitrogenase molybdenum iron protein domain"/>
    <property type="match status" value="3"/>
</dbReference>
<dbReference type="InterPro" id="IPR000510">
    <property type="entry name" value="Nase/OxRdtase_comp1"/>
</dbReference>
<dbReference type="InterPro" id="IPR005974">
    <property type="entry name" value="Nase_asu"/>
</dbReference>
<dbReference type="InterPro" id="IPR010143">
    <property type="entry name" value="Nase_comp1_asu"/>
</dbReference>
<dbReference type="InterPro" id="IPR000318">
    <property type="entry name" value="Nase_comp1_CS"/>
</dbReference>
<dbReference type="InterPro" id="IPR011290">
    <property type="entry name" value="Nase_Fe-Fe_asu"/>
</dbReference>
<dbReference type="NCBIfam" id="TIGR01284">
    <property type="entry name" value="alt_nitrog_alph"/>
    <property type="match status" value="1"/>
</dbReference>
<dbReference type="NCBIfam" id="TIGR01861">
    <property type="entry name" value="ANFD"/>
    <property type="match status" value="1"/>
</dbReference>
<dbReference type="NCBIfam" id="TIGR01862">
    <property type="entry name" value="N2-ase-Ialpha"/>
    <property type="match status" value="1"/>
</dbReference>
<dbReference type="PANTHER" id="PTHR43457">
    <property type="entry name" value="NITROGENASE MOLYBDENUM-IRON PROTEIN ALPHA CHAIN"/>
    <property type="match status" value="1"/>
</dbReference>
<dbReference type="PANTHER" id="PTHR43457:SF1">
    <property type="entry name" value="NITROGENASE MOLYBDENUM-IRON PROTEIN ALPHA CHAIN"/>
    <property type="match status" value="1"/>
</dbReference>
<dbReference type="Pfam" id="PF00148">
    <property type="entry name" value="Oxidored_nitro"/>
    <property type="match status" value="1"/>
</dbReference>
<dbReference type="SUPFAM" id="SSF53807">
    <property type="entry name" value="Helical backbone' metal receptor"/>
    <property type="match status" value="1"/>
</dbReference>
<dbReference type="PROSITE" id="PS00699">
    <property type="entry name" value="NITROGENASE_1_1"/>
    <property type="match status" value="1"/>
</dbReference>
<comment type="function">
    <text>This iron-iron protein is part of the nitrogenase complex that catalyzes the key enzymatic reactions in nitrogen fixation. Other nitrogenase complexes utilize a molybdenum-iron protein or a vanadium-iron protein.</text>
</comment>
<comment type="catalytic activity">
    <reaction>
        <text>N2 + 8 reduced [2Fe-2S]-[ferredoxin] + 16 ATP + 16 H2O = H2 + 8 oxidized [2Fe-2S]-[ferredoxin] + 2 NH4(+) + 16 ADP + 16 phosphate + 6 H(+)</text>
        <dbReference type="Rhea" id="RHEA:21448"/>
        <dbReference type="Rhea" id="RHEA-COMP:10000"/>
        <dbReference type="Rhea" id="RHEA-COMP:10001"/>
        <dbReference type="ChEBI" id="CHEBI:15377"/>
        <dbReference type="ChEBI" id="CHEBI:15378"/>
        <dbReference type="ChEBI" id="CHEBI:17997"/>
        <dbReference type="ChEBI" id="CHEBI:18276"/>
        <dbReference type="ChEBI" id="CHEBI:28938"/>
        <dbReference type="ChEBI" id="CHEBI:30616"/>
        <dbReference type="ChEBI" id="CHEBI:33737"/>
        <dbReference type="ChEBI" id="CHEBI:33738"/>
        <dbReference type="ChEBI" id="CHEBI:43474"/>
        <dbReference type="ChEBI" id="CHEBI:456216"/>
        <dbReference type="EC" id="1.18.6.1"/>
    </reaction>
</comment>
<comment type="cofactor">
    <cofactor evidence="1">
        <name>[8Fe-7S] cluster</name>
        <dbReference type="ChEBI" id="CHEBI:21143"/>
    </cofactor>
    <text evidence="1">Binds 1 [8Fe-7S] cluster per heterodimer.</text>
</comment>
<comment type="cofactor">
    <cofactor evidence="1">
        <name>[8Fe-9S-C-homocitryl] cluster</name>
        <dbReference type="ChEBI" id="CHEBI:60504"/>
    </cofactor>
    <text evidence="1">Binds 1 [8Fe-9S-C-homocitryl] cluster per subunit.</text>
</comment>
<comment type="subunit">
    <text evidence="1">Hexamer of two alpha, two beta, and two delta chains.</text>
</comment>
<comment type="miscellaneous">
    <text>The structure of the 8Fe-9S-C-homocitryl cluster is assumed to be analogous to the 7Fe-Mo-9S-C-homocitryl cluster.</text>
</comment>
<comment type="sequence caution" evidence="2">
    <conflict type="frameshift">
        <sequence resource="EMBL-CDS" id="AAB02935"/>
    </conflict>
</comment>
<feature type="chain" id="PRO_0000153063" description="Nitrogenase iron-iron protein alpha chain">
    <location>
        <begin position="1"/>
        <end position="518"/>
    </location>
</feature>
<feature type="binding site" evidence="1">
    <location>
        <position position="49"/>
    </location>
    <ligand>
        <name>[8Fe-7S] cluster</name>
        <dbReference type="ChEBI" id="CHEBI:21143"/>
        <note>ligand shared with beta chain</note>
    </ligand>
</feature>
<feature type="binding site" evidence="1">
    <location>
        <position position="75"/>
    </location>
    <ligand>
        <name>[8Fe-7S] cluster</name>
        <dbReference type="ChEBI" id="CHEBI:21143"/>
        <note>ligand shared with beta chain</note>
    </ligand>
</feature>
<feature type="binding site" evidence="1">
    <location>
        <position position="257"/>
    </location>
    <ligand>
        <name>[8Fe-9S-C-homocitryl] cluster</name>
        <dbReference type="ChEBI" id="CHEBI:60504"/>
    </ligand>
</feature>
<feature type="binding site" evidence="1">
    <location>
        <position position="423"/>
    </location>
    <ligand>
        <name>[8Fe-9S-C-homocitryl] cluster</name>
        <dbReference type="ChEBI" id="CHEBI:60504"/>
    </ligand>
</feature>
<proteinExistence type="inferred from homology"/>
<evidence type="ECO:0000250" key="1"/>
<evidence type="ECO:0000305" key="2"/>